<keyword id="KW-0369">Histidine metabolism</keyword>
<keyword id="KW-0378">Hydrolase</keyword>
<keyword id="KW-0464">Manganese</keyword>
<keyword id="KW-0479">Metal-binding</keyword>
<feature type="chain" id="PRO_0000258265" description="Formimidoylglutamase">
    <location>
        <begin position="1"/>
        <end position="328"/>
    </location>
</feature>
<feature type="binding site" evidence="1">
    <location>
        <position position="133"/>
    </location>
    <ligand>
        <name>Mn(2+)</name>
        <dbReference type="ChEBI" id="CHEBI:29035"/>
        <label>1</label>
    </ligand>
</feature>
<feature type="binding site" evidence="1">
    <location>
        <position position="159"/>
    </location>
    <ligand>
        <name>Mn(2+)</name>
        <dbReference type="ChEBI" id="CHEBI:29035"/>
        <label>1</label>
    </ligand>
</feature>
<feature type="binding site" evidence="1">
    <location>
        <position position="159"/>
    </location>
    <ligand>
        <name>Mn(2+)</name>
        <dbReference type="ChEBI" id="CHEBI:29035"/>
        <label>2</label>
    </ligand>
</feature>
<feature type="binding site" evidence="1">
    <location>
        <position position="161"/>
    </location>
    <ligand>
        <name>Mn(2+)</name>
        <dbReference type="ChEBI" id="CHEBI:29035"/>
        <label>2</label>
    </ligand>
</feature>
<feature type="binding site" evidence="1">
    <location>
        <position position="163"/>
    </location>
    <ligand>
        <name>Mn(2+)</name>
        <dbReference type="ChEBI" id="CHEBI:29035"/>
        <label>1</label>
    </ligand>
</feature>
<feature type="binding site" evidence="1">
    <location>
        <position position="253"/>
    </location>
    <ligand>
        <name>Mn(2+)</name>
        <dbReference type="ChEBI" id="CHEBI:29035"/>
        <label>1</label>
    </ligand>
</feature>
<feature type="binding site" evidence="1">
    <location>
        <position position="253"/>
    </location>
    <ligand>
        <name>Mn(2+)</name>
        <dbReference type="ChEBI" id="CHEBI:29035"/>
        <label>2</label>
    </ligand>
</feature>
<feature type="binding site" evidence="1">
    <location>
        <position position="255"/>
    </location>
    <ligand>
        <name>Mn(2+)</name>
        <dbReference type="ChEBI" id="CHEBI:29035"/>
        <label>2</label>
    </ligand>
</feature>
<name>HUTG_STRPC</name>
<organism>
    <name type="scientific">Streptococcus pyogenes serotype M12 (strain MGAS9429)</name>
    <dbReference type="NCBI Taxonomy" id="370551"/>
    <lineage>
        <taxon>Bacteria</taxon>
        <taxon>Bacillati</taxon>
        <taxon>Bacillota</taxon>
        <taxon>Bacilli</taxon>
        <taxon>Lactobacillales</taxon>
        <taxon>Streptococcaceae</taxon>
        <taxon>Streptococcus</taxon>
    </lineage>
</organism>
<reference key="1">
    <citation type="journal article" date="2006" name="Proc. Natl. Acad. Sci. U.S.A.">
        <title>Molecular genetic anatomy of inter- and intraserotype variation in the human bacterial pathogen group A Streptococcus.</title>
        <authorList>
            <person name="Beres S.B."/>
            <person name="Richter E.W."/>
            <person name="Nagiec M.J."/>
            <person name="Sumby P."/>
            <person name="Porcella S.F."/>
            <person name="DeLeo F.R."/>
            <person name="Musser J.M."/>
        </authorList>
    </citation>
    <scope>NUCLEOTIDE SEQUENCE [LARGE SCALE GENOMIC DNA]</scope>
    <source>
        <strain>MGAS9429</strain>
    </source>
</reference>
<accession>Q1JJJ7</accession>
<sequence>MLEDYYPSTTSYYHGGIDDDLYTAKWGMVMTFLDLNDSSLTPFEGTHFALIGFKSDKGVYINNGRVGAVESPAAIRTQLAKFPWHLGNQVMVYDVGNIDGPNRSLEQLQNSLSKAIKRMCDLNLKPIVLGGGHETAYGHYLGLRQSLSPSDDLAVINMDAHFDLRPYDQTGPNSGTGFRQMFDDAVADKRLFKYFVLGIQEHNNNLFLFDFVAKSKGIQFLTGQDIYQMGHQKVCRAIDRFLEGQERVYLTIDMDCFSVGAAPGVSAIQSLGVDPNLAVLVLQHIAASRKLVGFDVVEVSPPHDIDNHTANLAATFIFYLVQIMAQHS</sequence>
<evidence type="ECO:0000255" key="1">
    <source>
        <dbReference type="HAMAP-Rule" id="MF_00737"/>
    </source>
</evidence>
<evidence type="ECO:0000305" key="2"/>
<comment type="function">
    <text evidence="1">Catalyzes the conversion of N-formimidoyl-L-glutamate to L-glutamate and formamide.</text>
</comment>
<comment type="catalytic activity">
    <reaction evidence="1">
        <text>N-formimidoyl-L-glutamate + H2O = formamide + L-glutamate</text>
        <dbReference type="Rhea" id="RHEA:22492"/>
        <dbReference type="ChEBI" id="CHEBI:15377"/>
        <dbReference type="ChEBI" id="CHEBI:16397"/>
        <dbReference type="ChEBI" id="CHEBI:29985"/>
        <dbReference type="ChEBI" id="CHEBI:58928"/>
        <dbReference type="EC" id="3.5.3.8"/>
    </reaction>
</comment>
<comment type="cofactor">
    <cofactor evidence="1">
        <name>Mn(2+)</name>
        <dbReference type="ChEBI" id="CHEBI:29035"/>
    </cofactor>
    <text evidence="1">Binds 2 manganese ions per subunit.</text>
</comment>
<comment type="pathway">
    <text evidence="1">Amino-acid degradation; L-histidine degradation into L-glutamate; L-glutamate from N-formimidoyl-L-glutamate (hydrolase route): step 1/1.</text>
</comment>
<comment type="similarity">
    <text evidence="1">Belongs to the arginase family.</text>
</comment>
<comment type="sequence caution" evidence="2">
    <conflict type="erroneous initiation">
        <sequence resource="EMBL-CDS" id="ABF32976"/>
    </conflict>
</comment>
<proteinExistence type="inferred from homology"/>
<gene>
    <name evidence="1" type="primary">hutG</name>
    <name type="ordered locus">MGAS9429_Spy1789</name>
</gene>
<protein>
    <recommendedName>
        <fullName evidence="1">Formimidoylglutamase</fullName>
        <ecNumber evidence="1">3.5.3.8</ecNumber>
    </recommendedName>
    <alternativeName>
        <fullName evidence="1">Formiminoglutamase</fullName>
    </alternativeName>
    <alternativeName>
        <fullName evidence="1">Formiminoglutamate hydrolase</fullName>
    </alternativeName>
</protein>
<dbReference type="EC" id="3.5.3.8" evidence="1"/>
<dbReference type="EMBL" id="CP000259">
    <property type="protein sequence ID" value="ABF32976.1"/>
    <property type="status" value="ALT_INIT"/>
    <property type="molecule type" value="Genomic_DNA"/>
</dbReference>
<dbReference type="RefSeq" id="WP_002991324.1">
    <property type="nucleotide sequence ID" value="NC_008021.1"/>
</dbReference>
<dbReference type="SMR" id="Q1JJJ7"/>
<dbReference type="KEGG" id="spk:MGAS9429_Spy1789"/>
<dbReference type="HOGENOM" id="CLU_039478_2_0_9"/>
<dbReference type="UniPathway" id="UPA00379">
    <property type="reaction ID" value="UER00552"/>
</dbReference>
<dbReference type="Proteomes" id="UP000002433">
    <property type="component" value="Chromosome"/>
</dbReference>
<dbReference type="GO" id="GO:0008783">
    <property type="term" value="F:agmatinase activity"/>
    <property type="evidence" value="ECO:0007669"/>
    <property type="project" value="TreeGrafter"/>
</dbReference>
<dbReference type="GO" id="GO:0050415">
    <property type="term" value="F:formimidoylglutamase activity"/>
    <property type="evidence" value="ECO:0007669"/>
    <property type="project" value="UniProtKB-UniRule"/>
</dbReference>
<dbReference type="GO" id="GO:0030145">
    <property type="term" value="F:manganese ion binding"/>
    <property type="evidence" value="ECO:0007669"/>
    <property type="project" value="UniProtKB-UniRule"/>
</dbReference>
<dbReference type="GO" id="GO:0019556">
    <property type="term" value="P:L-histidine catabolic process to glutamate and formamide"/>
    <property type="evidence" value="ECO:0007669"/>
    <property type="project" value="UniProtKB-UniPathway"/>
</dbReference>
<dbReference type="GO" id="GO:0019557">
    <property type="term" value="P:L-histidine catabolic process to glutamate and formate"/>
    <property type="evidence" value="ECO:0007669"/>
    <property type="project" value="UniProtKB-UniPathway"/>
</dbReference>
<dbReference type="GO" id="GO:0033389">
    <property type="term" value="P:putrescine biosynthetic process from arginine, via agmatine"/>
    <property type="evidence" value="ECO:0007669"/>
    <property type="project" value="TreeGrafter"/>
</dbReference>
<dbReference type="CDD" id="cd09988">
    <property type="entry name" value="Formimidoylglutamase"/>
    <property type="match status" value="1"/>
</dbReference>
<dbReference type="Gene3D" id="3.40.800.10">
    <property type="entry name" value="Ureohydrolase domain"/>
    <property type="match status" value="1"/>
</dbReference>
<dbReference type="HAMAP" id="MF_00737">
    <property type="entry name" value="Formimidoylglutam"/>
    <property type="match status" value="1"/>
</dbReference>
<dbReference type="InterPro" id="IPR005923">
    <property type="entry name" value="HutG"/>
</dbReference>
<dbReference type="InterPro" id="IPR006035">
    <property type="entry name" value="Ureohydrolase"/>
</dbReference>
<dbReference type="InterPro" id="IPR023696">
    <property type="entry name" value="Ureohydrolase_dom_sf"/>
</dbReference>
<dbReference type="NCBIfam" id="NF010347">
    <property type="entry name" value="PRK13775.1"/>
    <property type="match status" value="1"/>
</dbReference>
<dbReference type="PANTHER" id="PTHR11358">
    <property type="entry name" value="ARGINASE/AGMATINASE"/>
    <property type="match status" value="1"/>
</dbReference>
<dbReference type="PANTHER" id="PTHR11358:SF35">
    <property type="entry name" value="FORMIMIDOYLGLUTAMASE"/>
    <property type="match status" value="1"/>
</dbReference>
<dbReference type="Pfam" id="PF00491">
    <property type="entry name" value="Arginase"/>
    <property type="match status" value="1"/>
</dbReference>
<dbReference type="PIRSF" id="PIRSF036979">
    <property type="entry name" value="Arginase"/>
    <property type="match status" value="1"/>
</dbReference>
<dbReference type="SUPFAM" id="SSF52768">
    <property type="entry name" value="Arginase/deacetylase"/>
    <property type="match status" value="1"/>
</dbReference>
<dbReference type="PROSITE" id="PS51409">
    <property type="entry name" value="ARGINASE_2"/>
    <property type="match status" value="1"/>
</dbReference>